<name>AIM11_CANAW</name>
<accession>C4YPM0</accession>
<gene>
    <name type="primary">AIM11</name>
    <name type="ORF">CAWG_02421</name>
</gene>
<comment type="subcellular location">
    <subcellularLocation>
        <location evidence="2">Membrane</location>
        <topology evidence="2">Multi-pass membrane protein</topology>
    </subcellularLocation>
</comment>
<comment type="similarity">
    <text evidence="2">Belongs to the AIM11 family.</text>
</comment>
<dbReference type="EMBL" id="CM000310">
    <property type="protein sequence ID" value="EEQ44159.1"/>
    <property type="molecule type" value="Genomic_DNA"/>
</dbReference>
<dbReference type="SMR" id="C4YPM0"/>
<dbReference type="PaxDb" id="5476-C4YPM0"/>
<dbReference type="VEuPathDB" id="FungiDB:CAWG_02421"/>
<dbReference type="HOGENOM" id="CLU_118700_0_0_1"/>
<dbReference type="OMA" id="RFAYKST"/>
<dbReference type="OrthoDB" id="9090at766764"/>
<dbReference type="Proteomes" id="UP000001429">
    <property type="component" value="Chromosome 3"/>
</dbReference>
<dbReference type="GO" id="GO:0016020">
    <property type="term" value="C:membrane"/>
    <property type="evidence" value="ECO:0007669"/>
    <property type="project" value="UniProtKB-SubCell"/>
</dbReference>
<dbReference type="GO" id="GO:0005739">
    <property type="term" value="C:mitochondrion"/>
    <property type="evidence" value="ECO:0007669"/>
    <property type="project" value="TreeGrafter"/>
</dbReference>
<dbReference type="InterPro" id="IPR038814">
    <property type="entry name" value="AIM11"/>
</dbReference>
<dbReference type="PANTHER" id="PTHR39136">
    <property type="entry name" value="ALTERED INHERITANCE OF MITOCHONDRIA PROTEIN 11"/>
    <property type="match status" value="1"/>
</dbReference>
<dbReference type="PANTHER" id="PTHR39136:SF1">
    <property type="entry name" value="ALTERED INHERITANCE OF MITOCHONDRIA PROTEIN 11"/>
    <property type="match status" value="1"/>
</dbReference>
<keyword id="KW-0472">Membrane</keyword>
<keyword id="KW-0812">Transmembrane</keyword>
<keyword id="KW-1133">Transmembrane helix</keyword>
<feature type="chain" id="PRO_0000405641" description="Altered inheritance of mitochondria protein 11">
    <location>
        <begin position="1"/>
        <end position="165"/>
    </location>
</feature>
<feature type="transmembrane region" description="Helical" evidence="1">
    <location>
        <begin position="27"/>
        <end position="49"/>
    </location>
</feature>
<feature type="transmembrane region" description="Helical" evidence="1">
    <location>
        <begin position="78"/>
        <end position="100"/>
    </location>
</feature>
<protein>
    <recommendedName>
        <fullName>Altered inheritance of mitochondria protein 11</fullName>
    </recommendedName>
</protein>
<proteinExistence type="inferred from homology"/>
<evidence type="ECO:0000255" key="1"/>
<evidence type="ECO:0000305" key="2"/>
<reference key="1">
    <citation type="journal article" date="2009" name="Nature">
        <title>Evolution of pathogenicity and sexual reproduction in eight Candida genomes.</title>
        <authorList>
            <person name="Butler G."/>
            <person name="Rasmussen M.D."/>
            <person name="Lin M.F."/>
            <person name="Santos M.A.S."/>
            <person name="Sakthikumar S."/>
            <person name="Munro C.A."/>
            <person name="Rheinbay E."/>
            <person name="Grabherr M."/>
            <person name="Forche A."/>
            <person name="Reedy J.L."/>
            <person name="Agrafioti I."/>
            <person name="Arnaud M.B."/>
            <person name="Bates S."/>
            <person name="Brown A.J.P."/>
            <person name="Brunke S."/>
            <person name="Costanzo M.C."/>
            <person name="Fitzpatrick D.A."/>
            <person name="de Groot P.W.J."/>
            <person name="Harris D."/>
            <person name="Hoyer L.L."/>
            <person name="Hube B."/>
            <person name="Klis F.M."/>
            <person name="Kodira C."/>
            <person name="Lennard N."/>
            <person name="Logue M.E."/>
            <person name="Martin R."/>
            <person name="Neiman A.M."/>
            <person name="Nikolaou E."/>
            <person name="Quail M.A."/>
            <person name="Quinn J."/>
            <person name="Santos M.C."/>
            <person name="Schmitzberger F.F."/>
            <person name="Sherlock G."/>
            <person name="Shah P."/>
            <person name="Silverstein K.A.T."/>
            <person name="Skrzypek M.S."/>
            <person name="Soll D."/>
            <person name="Staggs R."/>
            <person name="Stansfield I."/>
            <person name="Stumpf M.P.H."/>
            <person name="Sudbery P.E."/>
            <person name="Srikantha T."/>
            <person name="Zeng Q."/>
            <person name="Berman J."/>
            <person name="Berriman M."/>
            <person name="Heitman J."/>
            <person name="Gow N.A.R."/>
            <person name="Lorenz M.C."/>
            <person name="Birren B.W."/>
            <person name="Kellis M."/>
            <person name="Cuomo C.A."/>
        </authorList>
    </citation>
    <scope>NUCLEOTIDE SEQUENCE [LARGE SCALE GENOMIC DNA]</scope>
    <source>
        <strain>WO-1</strain>
    </source>
</reference>
<sequence length="165" mass="18562">MSDLLHKLNFKIADASPEYKQRRKIQMIRFFTASAVTIFASRFAYRATVSRQYIPTLFQGNHSPPLSYNFTTDAAVAVGTGTLLCGSVTGMTVFGLCWILDVSNIKEFGWRMKSMLGGWESEKKLSEAPMDEESSYIQDSLNDILDGKYDFENDTEEVAGELKTN</sequence>
<organism>
    <name type="scientific">Candida albicans (strain WO-1)</name>
    <name type="common">Yeast</name>
    <dbReference type="NCBI Taxonomy" id="294748"/>
    <lineage>
        <taxon>Eukaryota</taxon>
        <taxon>Fungi</taxon>
        <taxon>Dikarya</taxon>
        <taxon>Ascomycota</taxon>
        <taxon>Saccharomycotina</taxon>
        <taxon>Pichiomycetes</taxon>
        <taxon>Debaryomycetaceae</taxon>
        <taxon>Candida/Lodderomyces clade</taxon>
        <taxon>Candida</taxon>
    </lineage>
</organism>